<accession>B2V9Q7</accession>
<reference key="1">
    <citation type="journal article" date="2009" name="J. Bacteriol.">
        <title>Complete and draft genome sequences of six members of the Aquificales.</title>
        <authorList>
            <person name="Reysenbach A.-L."/>
            <person name="Hamamura N."/>
            <person name="Podar M."/>
            <person name="Griffiths E."/>
            <person name="Ferreira S."/>
            <person name="Hochstein R."/>
            <person name="Heidelberg J."/>
            <person name="Johnson J."/>
            <person name="Mead D."/>
            <person name="Pohorille A."/>
            <person name="Sarmiento M."/>
            <person name="Schweighofer K."/>
            <person name="Seshadri R."/>
            <person name="Voytek M.A."/>
        </authorList>
    </citation>
    <scope>NUCLEOTIDE SEQUENCE [LARGE SCALE GENOMIC DNA]</scope>
    <source>
        <strain>YO3AOP1</strain>
    </source>
</reference>
<organism>
    <name type="scientific">Sulfurihydrogenibium sp. (strain YO3AOP1)</name>
    <dbReference type="NCBI Taxonomy" id="436114"/>
    <lineage>
        <taxon>Bacteria</taxon>
        <taxon>Pseudomonadati</taxon>
        <taxon>Aquificota</taxon>
        <taxon>Aquificia</taxon>
        <taxon>Aquificales</taxon>
        <taxon>Hydrogenothermaceae</taxon>
        <taxon>Sulfurihydrogenibium</taxon>
    </lineage>
</organism>
<proteinExistence type="inferred from homology"/>
<gene>
    <name evidence="1" type="primary">efp</name>
    <name type="ordered locus">SYO3AOP1_1061</name>
</gene>
<comment type="function">
    <text evidence="1">Involved in peptide bond synthesis. Stimulates efficient translation and peptide-bond synthesis on native or reconstituted 70S ribosomes in vitro. Probably functions indirectly by altering the affinity of the ribosome for aminoacyl-tRNA, thus increasing their reactivity as acceptors for peptidyl transferase.</text>
</comment>
<comment type="pathway">
    <text evidence="1">Protein biosynthesis; polypeptide chain elongation.</text>
</comment>
<comment type="subcellular location">
    <subcellularLocation>
        <location evidence="1">Cytoplasm</location>
    </subcellularLocation>
</comment>
<comment type="similarity">
    <text evidence="1">Belongs to the elongation factor P family.</text>
</comment>
<feature type="chain" id="PRO_1000096215" description="Elongation factor P">
    <location>
        <begin position="1"/>
        <end position="190"/>
    </location>
</feature>
<evidence type="ECO:0000255" key="1">
    <source>
        <dbReference type="HAMAP-Rule" id="MF_00141"/>
    </source>
</evidence>
<dbReference type="EMBL" id="CP001080">
    <property type="protein sequence ID" value="ACD66680.1"/>
    <property type="molecule type" value="Genomic_DNA"/>
</dbReference>
<dbReference type="RefSeq" id="WP_012459748.1">
    <property type="nucleotide sequence ID" value="NC_010730.1"/>
</dbReference>
<dbReference type="SMR" id="B2V9Q7"/>
<dbReference type="STRING" id="436114.SYO3AOP1_1061"/>
<dbReference type="KEGG" id="sul:SYO3AOP1_1061"/>
<dbReference type="eggNOG" id="COG0231">
    <property type="taxonomic scope" value="Bacteria"/>
</dbReference>
<dbReference type="HOGENOM" id="CLU_074944_0_1_0"/>
<dbReference type="UniPathway" id="UPA00345"/>
<dbReference type="GO" id="GO:0005737">
    <property type="term" value="C:cytoplasm"/>
    <property type="evidence" value="ECO:0007669"/>
    <property type="project" value="UniProtKB-SubCell"/>
</dbReference>
<dbReference type="GO" id="GO:0003746">
    <property type="term" value="F:translation elongation factor activity"/>
    <property type="evidence" value="ECO:0007669"/>
    <property type="project" value="UniProtKB-UniRule"/>
</dbReference>
<dbReference type="GO" id="GO:0043043">
    <property type="term" value="P:peptide biosynthetic process"/>
    <property type="evidence" value="ECO:0007669"/>
    <property type="project" value="InterPro"/>
</dbReference>
<dbReference type="CDD" id="cd04470">
    <property type="entry name" value="S1_EF-P_repeat_1"/>
    <property type="match status" value="1"/>
</dbReference>
<dbReference type="CDD" id="cd05794">
    <property type="entry name" value="S1_EF-P_repeat_2"/>
    <property type="match status" value="1"/>
</dbReference>
<dbReference type="FunFam" id="2.30.30.30:FF:000003">
    <property type="entry name" value="Elongation factor P"/>
    <property type="match status" value="1"/>
</dbReference>
<dbReference type="FunFam" id="2.40.50.140:FF:000004">
    <property type="entry name" value="Elongation factor P"/>
    <property type="match status" value="1"/>
</dbReference>
<dbReference type="FunFam" id="2.40.50.140:FF:000009">
    <property type="entry name" value="Elongation factor P"/>
    <property type="match status" value="1"/>
</dbReference>
<dbReference type="Gene3D" id="2.30.30.30">
    <property type="match status" value="1"/>
</dbReference>
<dbReference type="Gene3D" id="2.40.50.140">
    <property type="entry name" value="Nucleic acid-binding proteins"/>
    <property type="match status" value="2"/>
</dbReference>
<dbReference type="HAMAP" id="MF_00141">
    <property type="entry name" value="EF_P"/>
    <property type="match status" value="1"/>
</dbReference>
<dbReference type="InterPro" id="IPR015365">
    <property type="entry name" value="Elong-fact-P_C"/>
</dbReference>
<dbReference type="InterPro" id="IPR012340">
    <property type="entry name" value="NA-bd_OB-fold"/>
</dbReference>
<dbReference type="InterPro" id="IPR014722">
    <property type="entry name" value="Rib_uL2_dom2"/>
</dbReference>
<dbReference type="InterPro" id="IPR020599">
    <property type="entry name" value="Transl_elong_fac_P/YeiP"/>
</dbReference>
<dbReference type="InterPro" id="IPR013185">
    <property type="entry name" value="Transl_elong_KOW-like"/>
</dbReference>
<dbReference type="InterPro" id="IPR001059">
    <property type="entry name" value="Transl_elong_P/YeiP_cen"/>
</dbReference>
<dbReference type="InterPro" id="IPR013852">
    <property type="entry name" value="Transl_elong_P/YeiP_CS"/>
</dbReference>
<dbReference type="InterPro" id="IPR011768">
    <property type="entry name" value="Transl_elongation_fac_P"/>
</dbReference>
<dbReference type="InterPro" id="IPR008991">
    <property type="entry name" value="Translation_prot_SH3-like_sf"/>
</dbReference>
<dbReference type="NCBIfam" id="TIGR00038">
    <property type="entry name" value="efp"/>
    <property type="match status" value="1"/>
</dbReference>
<dbReference type="NCBIfam" id="NF001810">
    <property type="entry name" value="PRK00529.1"/>
    <property type="match status" value="1"/>
</dbReference>
<dbReference type="PANTHER" id="PTHR30053">
    <property type="entry name" value="ELONGATION FACTOR P"/>
    <property type="match status" value="1"/>
</dbReference>
<dbReference type="PANTHER" id="PTHR30053:SF12">
    <property type="entry name" value="ELONGATION FACTOR P (EF-P) FAMILY PROTEIN"/>
    <property type="match status" value="1"/>
</dbReference>
<dbReference type="Pfam" id="PF01132">
    <property type="entry name" value="EFP"/>
    <property type="match status" value="1"/>
</dbReference>
<dbReference type="Pfam" id="PF08207">
    <property type="entry name" value="EFP_N"/>
    <property type="match status" value="1"/>
</dbReference>
<dbReference type="Pfam" id="PF09285">
    <property type="entry name" value="Elong-fact-P_C"/>
    <property type="match status" value="1"/>
</dbReference>
<dbReference type="PIRSF" id="PIRSF005901">
    <property type="entry name" value="EF-P"/>
    <property type="match status" value="1"/>
</dbReference>
<dbReference type="SMART" id="SM01185">
    <property type="entry name" value="EFP"/>
    <property type="match status" value="1"/>
</dbReference>
<dbReference type="SMART" id="SM00841">
    <property type="entry name" value="Elong-fact-P_C"/>
    <property type="match status" value="1"/>
</dbReference>
<dbReference type="SUPFAM" id="SSF50249">
    <property type="entry name" value="Nucleic acid-binding proteins"/>
    <property type="match status" value="2"/>
</dbReference>
<dbReference type="SUPFAM" id="SSF50104">
    <property type="entry name" value="Translation proteins SH3-like domain"/>
    <property type="match status" value="1"/>
</dbReference>
<dbReference type="PROSITE" id="PS01275">
    <property type="entry name" value="EFP"/>
    <property type="match status" value="1"/>
</dbReference>
<sequence length="190" mass="21655">MGVKIDINRIARDQFILVDNQPYKVVSYEHVKPGKGQAFVRVKAKNMRTGNVTEFTFKSSDSIELADFEQRFMNYSYTDGTYYYFLDTNTYETFAVPAEAMEHEAQFLKEGMQVVVFLDRGNPIGIELPKHEVYEVIETEPGFKGDTATNTLKPAKIETGATVQVPLFINVGDRIKVDTEKGTYIERVNK</sequence>
<keyword id="KW-0963">Cytoplasm</keyword>
<keyword id="KW-0251">Elongation factor</keyword>
<keyword id="KW-0648">Protein biosynthesis</keyword>
<protein>
    <recommendedName>
        <fullName evidence="1">Elongation factor P</fullName>
        <shortName evidence="1">EF-P</shortName>
    </recommendedName>
</protein>
<name>EFP_SULSY</name>